<feature type="chain" id="PRO_1000070986" description="Phosphate acyltransferase">
    <location>
        <begin position="1"/>
        <end position="342"/>
    </location>
</feature>
<protein>
    <recommendedName>
        <fullName evidence="1">Phosphate acyltransferase</fullName>
        <ecNumber evidence="1">2.3.1.274</ecNumber>
    </recommendedName>
    <alternativeName>
        <fullName evidence="1">Acyl-ACP phosphotransacylase</fullName>
    </alternativeName>
    <alternativeName>
        <fullName evidence="1">Acyl-[acyl-carrier-protein]--phosphate acyltransferase</fullName>
    </alternativeName>
    <alternativeName>
        <fullName evidence="1">Phosphate-acyl-ACP acyltransferase</fullName>
    </alternativeName>
</protein>
<dbReference type="EC" id="2.3.1.274" evidence="1"/>
<dbReference type="EMBL" id="CP000746">
    <property type="protein sequence ID" value="ABR75350.1"/>
    <property type="molecule type" value="Genomic_DNA"/>
</dbReference>
<dbReference type="RefSeq" id="WP_012073727.1">
    <property type="nucleotide sequence ID" value="NC_009655.1"/>
</dbReference>
<dbReference type="SMR" id="A6VQV3"/>
<dbReference type="STRING" id="339671.Asuc_2004"/>
<dbReference type="KEGG" id="asu:Asuc_2004"/>
<dbReference type="eggNOG" id="COG0416">
    <property type="taxonomic scope" value="Bacteria"/>
</dbReference>
<dbReference type="HOGENOM" id="CLU_039379_1_0_6"/>
<dbReference type="OrthoDB" id="9806408at2"/>
<dbReference type="UniPathway" id="UPA00085"/>
<dbReference type="Proteomes" id="UP000001114">
    <property type="component" value="Chromosome"/>
</dbReference>
<dbReference type="GO" id="GO:0005737">
    <property type="term" value="C:cytoplasm"/>
    <property type="evidence" value="ECO:0007669"/>
    <property type="project" value="UniProtKB-SubCell"/>
</dbReference>
<dbReference type="GO" id="GO:0043811">
    <property type="term" value="F:phosphate:acyl-[acyl carrier protein] acyltransferase activity"/>
    <property type="evidence" value="ECO:0007669"/>
    <property type="project" value="UniProtKB-UniRule"/>
</dbReference>
<dbReference type="GO" id="GO:0006633">
    <property type="term" value="P:fatty acid biosynthetic process"/>
    <property type="evidence" value="ECO:0007669"/>
    <property type="project" value="UniProtKB-UniRule"/>
</dbReference>
<dbReference type="GO" id="GO:0008654">
    <property type="term" value="P:phospholipid biosynthetic process"/>
    <property type="evidence" value="ECO:0007669"/>
    <property type="project" value="UniProtKB-KW"/>
</dbReference>
<dbReference type="Gene3D" id="3.40.718.10">
    <property type="entry name" value="Isopropylmalate Dehydrogenase"/>
    <property type="match status" value="1"/>
</dbReference>
<dbReference type="HAMAP" id="MF_00019">
    <property type="entry name" value="PlsX"/>
    <property type="match status" value="1"/>
</dbReference>
<dbReference type="InterPro" id="IPR003664">
    <property type="entry name" value="FA_synthesis"/>
</dbReference>
<dbReference type="InterPro" id="IPR012281">
    <property type="entry name" value="Phospholipid_synth_PlsX-like"/>
</dbReference>
<dbReference type="NCBIfam" id="TIGR00182">
    <property type="entry name" value="plsX"/>
    <property type="match status" value="1"/>
</dbReference>
<dbReference type="PANTHER" id="PTHR30100">
    <property type="entry name" value="FATTY ACID/PHOSPHOLIPID SYNTHESIS PROTEIN PLSX"/>
    <property type="match status" value="1"/>
</dbReference>
<dbReference type="PANTHER" id="PTHR30100:SF1">
    <property type="entry name" value="PHOSPHATE ACYLTRANSFERASE"/>
    <property type="match status" value="1"/>
</dbReference>
<dbReference type="Pfam" id="PF02504">
    <property type="entry name" value="FA_synthesis"/>
    <property type="match status" value="1"/>
</dbReference>
<dbReference type="PIRSF" id="PIRSF002465">
    <property type="entry name" value="Phsphlp_syn_PlsX"/>
    <property type="match status" value="1"/>
</dbReference>
<dbReference type="SUPFAM" id="SSF53659">
    <property type="entry name" value="Isocitrate/Isopropylmalate dehydrogenase-like"/>
    <property type="match status" value="1"/>
</dbReference>
<proteinExistence type="inferred from homology"/>
<keyword id="KW-0963">Cytoplasm</keyword>
<keyword id="KW-0444">Lipid biosynthesis</keyword>
<keyword id="KW-0443">Lipid metabolism</keyword>
<keyword id="KW-0594">Phospholipid biosynthesis</keyword>
<keyword id="KW-1208">Phospholipid metabolism</keyword>
<keyword id="KW-1185">Reference proteome</keyword>
<keyword id="KW-0808">Transferase</keyword>
<name>PLSX_ACTSZ</name>
<organism>
    <name type="scientific">Actinobacillus succinogenes (strain ATCC 55618 / DSM 22257 / CCUG 43843 / 130Z)</name>
    <dbReference type="NCBI Taxonomy" id="339671"/>
    <lineage>
        <taxon>Bacteria</taxon>
        <taxon>Pseudomonadati</taxon>
        <taxon>Pseudomonadota</taxon>
        <taxon>Gammaproteobacteria</taxon>
        <taxon>Pasteurellales</taxon>
        <taxon>Pasteurellaceae</taxon>
        <taxon>Actinobacillus</taxon>
    </lineage>
</organism>
<accession>A6VQV3</accession>
<comment type="function">
    <text evidence="1">Catalyzes the reversible formation of acyl-phosphate (acyl-PO(4)) from acyl-[acyl-carrier-protein] (acyl-ACP). This enzyme utilizes acyl-ACP as fatty acyl donor, but not acyl-CoA.</text>
</comment>
<comment type="catalytic activity">
    <reaction evidence="1">
        <text>a fatty acyl-[ACP] + phosphate = an acyl phosphate + holo-[ACP]</text>
        <dbReference type="Rhea" id="RHEA:42292"/>
        <dbReference type="Rhea" id="RHEA-COMP:9685"/>
        <dbReference type="Rhea" id="RHEA-COMP:14125"/>
        <dbReference type="ChEBI" id="CHEBI:43474"/>
        <dbReference type="ChEBI" id="CHEBI:59918"/>
        <dbReference type="ChEBI" id="CHEBI:64479"/>
        <dbReference type="ChEBI" id="CHEBI:138651"/>
        <dbReference type="EC" id="2.3.1.274"/>
    </reaction>
</comment>
<comment type="pathway">
    <text evidence="1">Lipid metabolism; phospholipid metabolism.</text>
</comment>
<comment type="subunit">
    <text evidence="1">Homodimer. Probably interacts with PlsY.</text>
</comment>
<comment type="subcellular location">
    <subcellularLocation>
        <location evidence="1">Cytoplasm</location>
    </subcellularLocation>
    <text evidence="1">Associated with the membrane possibly through PlsY.</text>
</comment>
<comment type="similarity">
    <text evidence="1">Belongs to the PlsX family.</text>
</comment>
<evidence type="ECO:0000255" key="1">
    <source>
        <dbReference type="HAMAP-Rule" id="MF_00019"/>
    </source>
</evidence>
<gene>
    <name evidence="1" type="primary">plsX</name>
    <name type="ordered locus">Asuc_2004</name>
</gene>
<reference key="1">
    <citation type="journal article" date="2010" name="BMC Genomics">
        <title>A genomic perspective on the potential of Actinobacillus succinogenes for industrial succinate production.</title>
        <authorList>
            <person name="McKinlay J.B."/>
            <person name="Laivenieks M."/>
            <person name="Schindler B.D."/>
            <person name="McKinlay A.A."/>
            <person name="Siddaramappa S."/>
            <person name="Challacombe J.F."/>
            <person name="Lowry S.R."/>
            <person name="Clum A."/>
            <person name="Lapidus A.L."/>
            <person name="Burkhart K.B."/>
            <person name="Harkins V."/>
            <person name="Vieille C."/>
        </authorList>
    </citation>
    <scope>NUCLEOTIDE SEQUENCE [LARGE SCALE GENOMIC DNA]</scope>
    <source>
        <strain>ATCC 55618 / DSM 22257 / CCUG 43843 / 130Z</strain>
    </source>
</reference>
<sequence>MSRLTLALDVMGGDIGPRITIPASLQALEKDPMLSLLLFGDSRQIQSELDKVSDKISSDVGERLAIRHASHVIDNNQSVTEALRHSKGTSMRLAIESVQRGEAQGCVSGGNTGALMGLAKVILQPLKGIQRPALVSILPTIDGNHSVMLDLGANIDCNAENLYQFALMGAIFAENQLNLVFPRVALLNIGVEAIKGYKSIREASEMIKQNTALNYIGFIEGNYLLNGIADVIVSDGFAGNVALKTLEGAAQNVIGLLKGHSRNNVLKPLFGRLMKILFRDSYQRLRSINPEQYNGASLIGLTSVVVKSHGGAGINAFSNAVKDAALQVRQQIPQKILDGLNK</sequence>